<comment type="function">
    <text evidence="1">Is not toxic to insects.</text>
</comment>
<comment type="subcellular location">
    <subcellularLocation>
        <location>Secreted</location>
    </subcellularLocation>
</comment>
<comment type="miscellaneous">
    <text evidence="2">Has been extracted from the spider web.</text>
</comment>
<comment type="miscellaneous">
    <text evidence="2">Is not a smooth muscle agonist.</text>
</comment>
<name>BRK4_TRICX</name>
<keyword id="KW-0027">Amidation</keyword>
<keyword id="KW-0903">Direct protein sequencing</keyword>
<keyword id="KW-0964">Secreted</keyword>
<sequence length="10" mass="1118">LTPETASFPR</sequence>
<organism>
    <name type="scientific">Trichonephila clavipes</name>
    <name type="common">Golden silk orbweaver</name>
    <name type="synonym">Nephila clavipes</name>
    <dbReference type="NCBI Taxonomy" id="2585209"/>
    <lineage>
        <taxon>Eukaryota</taxon>
        <taxon>Metazoa</taxon>
        <taxon>Ecdysozoa</taxon>
        <taxon>Arthropoda</taxon>
        <taxon>Chelicerata</taxon>
        <taxon>Arachnida</taxon>
        <taxon>Araneae</taxon>
        <taxon>Araneomorphae</taxon>
        <taxon>Entelegynae</taxon>
        <taxon>Araneoidea</taxon>
        <taxon>Nephilidae</taxon>
        <taxon>Trichonephila</taxon>
    </lineage>
</organism>
<proteinExistence type="evidence at protein level"/>
<dbReference type="GO" id="GO:0005576">
    <property type="term" value="C:extracellular region"/>
    <property type="evidence" value="ECO:0007669"/>
    <property type="project" value="UniProtKB-SubCell"/>
</dbReference>
<evidence type="ECO:0000269" key="1">
    <source>
    </source>
</evidence>
<evidence type="ECO:0000305" key="2">
    <source>
    </source>
</evidence>
<accession>P0DM75</accession>
<feature type="peptide" id="PRO_0000424407" description="Fr.III-4">
    <location>
        <begin position="1"/>
        <end position="10"/>
    </location>
</feature>
<feature type="modified residue" description="Arginine amide" evidence="1">
    <location>
        <position position="10"/>
    </location>
</feature>
<reference key="1">
    <citation type="journal article" date="2006" name="Peptides">
        <title>Multiple bradykinin-related peptides from the capture web of the spider Nephila clavipes (Araneae, Tetragnatidae).</title>
        <authorList>
            <person name="Volsi E.C."/>
            <person name="Mendes M.A."/>
            <person name="Marques M.R."/>
            <person name="dos Santos L.D."/>
            <person name="Santos K.S."/>
            <person name="de Souza B.M."/>
            <person name="Babieri E.F."/>
            <person name="Palma M.S."/>
        </authorList>
    </citation>
    <scope>PROTEIN SEQUENCE</scope>
    <scope>IDENTIFICATION BY MASS SPECTROMETRY</scope>
    <scope>SYNTHESIS</scope>
    <scope>FUNCTION</scope>
    <scope>BIOASSAY</scope>
    <scope>TOXIC DOSE</scope>
    <scope>AMIDATION AT ARG-10</scope>
</reference>
<protein>
    <recommendedName>
        <fullName>Fr.III-4</fullName>
    </recommendedName>
</protein>